<reference key="1">
    <citation type="journal article" date="2002" name="Nature">
        <title>Comparison of the genomes of two Xanthomonas pathogens with differing host specificities.</title>
        <authorList>
            <person name="da Silva A.C.R."/>
            <person name="Ferro J.A."/>
            <person name="Reinach F.C."/>
            <person name="Farah C.S."/>
            <person name="Furlan L.R."/>
            <person name="Quaggio R.B."/>
            <person name="Monteiro-Vitorello C.B."/>
            <person name="Van Sluys M.A."/>
            <person name="Almeida N.F. Jr."/>
            <person name="Alves L.M.C."/>
            <person name="do Amaral A.M."/>
            <person name="Bertolini M.C."/>
            <person name="Camargo L.E.A."/>
            <person name="Camarotte G."/>
            <person name="Cannavan F."/>
            <person name="Cardozo J."/>
            <person name="Chambergo F."/>
            <person name="Ciapina L.P."/>
            <person name="Cicarelli R.M.B."/>
            <person name="Coutinho L.L."/>
            <person name="Cursino-Santos J.R."/>
            <person name="El-Dorry H."/>
            <person name="Faria J.B."/>
            <person name="Ferreira A.J.S."/>
            <person name="Ferreira R.C.C."/>
            <person name="Ferro M.I.T."/>
            <person name="Formighieri E.F."/>
            <person name="Franco M.C."/>
            <person name="Greggio C.C."/>
            <person name="Gruber A."/>
            <person name="Katsuyama A.M."/>
            <person name="Kishi L.T."/>
            <person name="Leite R.P."/>
            <person name="Lemos E.G.M."/>
            <person name="Lemos M.V.F."/>
            <person name="Locali E.C."/>
            <person name="Machado M.A."/>
            <person name="Madeira A.M.B.N."/>
            <person name="Martinez-Rossi N.M."/>
            <person name="Martins E.C."/>
            <person name="Meidanis J."/>
            <person name="Menck C.F.M."/>
            <person name="Miyaki C.Y."/>
            <person name="Moon D.H."/>
            <person name="Moreira L.M."/>
            <person name="Novo M.T.M."/>
            <person name="Okura V.K."/>
            <person name="Oliveira M.C."/>
            <person name="Oliveira V.R."/>
            <person name="Pereira H.A."/>
            <person name="Rossi A."/>
            <person name="Sena J.A.D."/>
            <person name="Silva C."/>
            <person name="de Souza R.F."/>
            <person name="Spinola L.A.F."/>
            <person name="Takita M.A."/>
            <person name="Tamura R.E."/>
            <person name="Teixeira E.C."/>
            <person name="Tezza R.I.D."/>
            <person name="Trindade dos Santos M."/>
            <person name="Truffi D."/>
            <person name="Tsai S.M."/>
            <person name="White F.F."/>
            <person name="Setubal J.C."/>
            <person name="Kitajima J.P."/>
        </authorList>
    </citation>
    <scope>NUCLEOTIDE SEQUENCE [LARGE SCALE GENOMIC DNA]</scope>
    <source>
        <strain>ATCC 33913 / DSM 3586 / NCPPB 528 / LMG 568 / P 25</strain>
    </source>
</reference>
<keyword id="KW-1185">Reference proteome</keyword>
<keyword id="KW-0687">Ribonucleoprotein</keyword>
<keyword id="KW-0689">Ribosomal protein</keyword>
<keyword id="KW-0694">RNA-binding</keyword>
<keyword id="KW-0699">rRNA-binding</keyword>
<name>RS6_XANCP</name>
<accession>Q8PAC2</accession>
<gene>
    <name evidence="1" type="primary">rpsF</name>
    <name type="ordered locus">XCC1563</name>
</gene>
<evidence type="ECO:0000255" key="1">
    <source>
        <dbReference type="HAMAP-Rule" id="MF_00360"/>
    </source>
</evidence>
<evidence type="ECO:0000256" key="2">
    <source>
        <dbReference type="SAM" id="MobiDB-lite"/>
    </source>
</evidence>
<evidence type="ECO:0000305" key="3"/>
<protein>
    <recommendedName>
        <fullName evidence="1">Small ribosomal subunit protein bS6</fullName>
    </recommendedName>
    <alternativeName>
        <fullName evidence="3">30S ribosomal protein S6</fullName>
    </alternativeName>
</protein>
<feature type="chain" id="PRO_0000176878" description="Small ribosomal subunit protein bS6">
    <location>
        <begin position="1"/>
        <end position="144"/>
    </location>
</feature>
<feature type="region of interest" description="Disordered" evidence="2">
    <location>
        <begin position="97"/>
        <end position="144"/>
    </location>
</feature>
<feature type="compositionally biased region" description="Basic and acidic residues" evidence="2">
    <location>
        <begin position="105"/>
        <end position="124"/>
    </location>
</feature>
<comment type="function">
    <text evidence="1">Binds together with bS18 to 16S ribosomal RNA.</text>
</comment>
<comment type="similarity">
    <text evidence="1">Belongs to the bacterial ribosomal protein bS6 family.</text>
</comment>
<dbReference type="EMBL" id="AE008922">
    <property type="protein sequence ID" value="AAM40858.1"/>
    <property type="molecule type" value="Genomic_DNA"/>
</dbReference>
<dbReference type="RefSeq" id="NP_636934.1">
    <property type="nucleotide sequence ID" value="NC_003902.1"/>
</dbReference>
<dbReference type="RefSeq" id="WP_011036747.1">
    <property type="nucleotide sequence ID" value="NC_003902.1"/>
</dbReference>
<dbReference type="SMR" id="Q8PAC2"/>
<dbReference type="STRING" id="190485.XCC1563"/>
<dbReference type="EnsemblBacteria" id="AAM40858">
    <property type="protein sequence ID" value="AAM40858"/>
    <property type="gene ID" value="XCC1563"/>
</dbReference>
<dbReference type="GeneID" id="58013845"/>
<dbReference type="KEGG" id="xcc:XCC1563"/>
<dbReference type="PATRIC" id="fig|190485.4.peg.1676"/>
<dbReference type="eggNOG" id="COG0360">
    <property type="taxonomic scope" value="Bacteria"/>
</dbReference>
<dbReference type="HOGENOM" id="CLU_113441_6_0_6"/>
<dbReference type="OrthoDB" id="9812702at2"/>
<dbReference type="Proteomes" id="UP000001010">
    <property type="component" value="Chromosome"/>
</dbReference>
<dbReference type="GO" id="GO:0022627">
    <property type="term" value="C:cytosolic small ribosomal subunit"/>
    <property type="evidence" value="ECO:0000318"/>
    <property type="project" value="GO_Central"/>
</dbReference>
<dbReference type="GO" id="GO:0070181">
    <property type="term" value="F:small ribosomal subunit rRNA binding"/>
    <property type="evidence" value="ECO:0000318"/>
    <property type="project" value="GO_Central"/>
</dbReference>
<dbReference type="GO" id="GO:0003735">
    <property type="term" value="F:structural constituent of ribosome"/>
    <property type="evidence" value="ECO:0000318"/>
    <property type="project" value="GO_Central"/>
</dbReference>
<dbReference type="GO" id="GO:0006412">
    <property type="term" value="P:translation"/>
    <property type="evidence" value="ECO:0007669"/>
    <property type="project" value="UniProtKB-UniRule"/>
</dbReference>
<dbReference type="CDD" id="cd00473">
    <property type="entry name" value="bS6"/>
    <property type="match status" value="1"/>
</dbReference>
<dbReference type="FunFam" id="3.30.70.60:FF:000003">
    <property type="entry name" value="30S ribosomal protein S6"/>
    <property type="match status" value="1"/>
</dbReference>
<dbReference type="Gene3D" id="3.30.70.60">
    <property type="match status" value="1"/>
</dbReference>
<dbReference type="HAMAP" id="MF_00360">
    <property type="entry name" value="Ribosomal_bS6"/>
    <property type="match status" value="1"/>
</dbReference>
<dbReference type="InterPro" id="IPR000529">
    <property type="entry name" value="Ribosomal_bS6"/>
</dbReference>
<dbReference type="InterPro" id="IPR035980">
    <property type="entry name" value="Ribosomal_bS6_sf"/>
</dbReference>
<dbReference type="InterPro" id="IPR020814">
    <property type="entry name" value="Ribosomal_S6_plastid/chlpt"/>
</dbReference>
<dbReference type="InterPro" id="IPR014717">
    <property type="entry name" value="Transl_elong_EF1B/ribsomal_bS6"/>
</dbReference>
<dbReference type="NCBIfam" id="TIGR00166">
    <property type="entry name" value="S6"/>
    <property type="match status" value="1"/>
</dbReference>
<dbReference type="PANTHER" id="PTHR21011">
    <property type="entry name" value="MITOCHONDRIAL 28S RIBOSOMAL PROTEIN S6"/>
    <property type="match status" value="1"/>
</dbReference>
<dbReference type="PANTHER" id="PTHR21011:SF1">
    <property type="entry name" value="SMALL RIBOSOMAL SUBUNIT PROTEIN BS6M"/>
    <property type="match status" value="1"/>
</dbReference>
<dbReference type="Pfam" id="PF01250">
    <property type="entry name" value="Ribosomal_S6"/>
    <property type="match status" value="1"/>
</dbReference>
<dbReference type="SUPFAM" id="SSF54995">
    <property type="entry name" value="Ribosomal protein S6"/>
    <property type="match status" value="1"/>
</dbReference>
<sequence>MSRHYEVVFLVHPDQSEQVPAMIERYKSLIEGGNGTIHRLEDWGRRQLAYPIQNLVKAHYVLLNIEVDQAVLSELVESFRFNDAVLRHLVIKRDGPDTEQSLIMKSKDEKGDKPERSERRRRDDEEGDAAPAATDTDGDNAEAA</sequence>
<organism>
    <name type="scientific">Xanthomonas campestris pv. campestris (strain ATCC 33913 / DSM 3586 / NCPPB 528 / LMG 568 / P 25)</name>
    <dbReference type="NCBI Taxonomy" id="190485"/>
    <lineage>
        <taxon>Bacteria</taxon>
        <taxon>Pseudomonadati</taxon>
        <taxon>Pseudomonadota</taxon>
        <taxon>Gammaproteobacteria</taxon>
        <taxon>Lysobacterales</taxon>
        <taxon>Lysobacteraceae</taxon>
        <taxon>Xanthomonas</taxon>
    </lineage>
</organism>
<proteinExistence type="inferred from homology"/>